<organism>
    <name type="scientific">Physcomitrium patens</name>
    <name type="common">Spreading-leaved earth moss</name>
    <name type="synonym">Physcomitrella patens</name>
    <dbReference type="NCBI Taxonomy" id="3218"/>
    <lineage>
        <taxon>Eukaryota</taxon>
        <taxon>Viridiplantae</taxon>
        <taxon>Streptophyta</taxon>
        <taxon>Embryophyta</taxon>
        <taxon>Bryophyta</taxon>
        <taxon>Bryophytina</taxon>
        <taxon>Bryopsida</taxon>
        <taxon>Funariidae</taxon>
        <taxon>Funariales</taxon>
        <taxon>Funariaceae</taxon>
        <taxon>Physcomitrium</taxon>
    </lineage>
</organism>
<reference key="1">
    <citation type="journal article" date="2003" name="Nucleic Acids Res.">
        <title>Complete chloroplast DNA sequence of the moss Physcomitrella patens: evidence for the loss and relocation of rpoA from the chloroplast to the nucleus.</title>
        <authorList>
            <person name="Sugiura C."/>
            <person name="Kobayashi Y."/>
            <person name="Setsuyuki A."/>
            <person name="Sugita C."/>
            <person name="Sugita M."/>
        </authorList>
    </citation>
    <scope>NUCLEOTIDE SEQUENCE [LARGE SCALE GENOMIC DNA]</scope>
    <source>
        <strain>cv. Gransden 2004</strain>
    </source>
</reference>
<feature type="chain" id="PRO_0000219835" description="Light-independent protochlorophyllide reductase subunit B">
    <location>
        <begin position="1"/>
        <end position="510"/>
    </location>
</feature>
<feature type="active site" description="Proton donor" evidence="1">
    <location>
        <position position="296"/>
    </location>
</feature>
<feature type="binding site" evidence="1">
    <location>
        <position position="36"/>
    </location>
    <ligand>
        <name>[4Fe-4S] cluster</name>
        <dbReference type="ChEBI" id="CHEBI:49883"/>
        <note>ligand shared with heterodimeric partner</note>
    </ligand>
</feature>
<feature type="binding site" evidence="1">
    <location>
        <begin position="431"/>
        <end position="432"/>
    </location>
    <ligand>
        <name>substrate</name>
    </ligand>
</feature>
<evidence type="ECO:0000255" key="1">
    <source>
        <dbReference type="HAMAP-Rule" id="MF_00353"/>
    </source>
</evidence>
<name>CHLB_PHYPA</name>
<sequence length="510" mass="57830">MKLAYWMYAGPAHIGTLRVASSFKNVHAIMHAPLGDDYFNVMRSMLERERDFTPVTASIVDRHVLARGSQEKVVDNINRKDKEERPDLIVLTPTCTSSILQEDLQNFVDRASTTSNSDVILADVNHYRVNELQAADRTLEQVVRYYLEKARRQGTLDQSLTKEPSANIIGIFTLGFHNQHDCRELKRLLQDLNIKVNKVIPEGGSVKDLQSLPKAWFNLVPYREIGLMTAIYLEKNFGMPYVSITPMGIVDTAECIRQIQKHVNNLIPNKKVDYEPYIDQQTRFVSQAAWFSRSIDCQNLTGKKAVVFGDATHAASITRILAREMGIRVGCTGTYCKHDTEWFKEQVQGFCDEILTTDDHTEVGDMIARIEPSAIFGTQMERHIGKRLDIPCGVISSPVHIQNFPLGYRPFLGYEGTNQIADLIYNSFTLGMEDHLLEIFGGHDTKEVITKSLSTDTDLTWNYESQLELNKIPGFVRGKIKRNTEKFARQNNITTITVEIMYAAKEALSA</sequence>
<proteinExistence type="inferred from homology"/>
<accession>Q6YXN5</accession>
<protein>
    <recommendedName>
        <fullName evidence="1">Light-independent protochlorophyllide reductase subunit B</fullName>
        <shortName evidence="1">DPOR subunit B</shortName>
        <shortName evidence="1">LI-POR subunit B</shortName>
        <ecNumber evidence="1">1.3.7.7</ecNumber>
    </recommendedName>
</protein>
<keyword id="KW-0004">4Fe-4S</keyword>
<keyword id="KW-0067">ATP-binding</keyword>
<keyword id="KW-0149">Chlorophyll biosynthesis</keyword>
<keyword id="KW-0150">Chloroplast</keyword>
<keyword id="KW-0408">Iron</keyword>
<keyword id="KW-0411">Iron-sulfur</keyword>
<keyword id="KW-0479">Metal-binding</keyword>
<keyword id="KW-0547">Nucleotide-binding</keyword>
<keyword id="KW-0560">Oxidoreductase</keyword>
<keyword id="KW-0602">Photosynthesis</keyword>
<keyword id="KW-0934">Plastid</keyword>
<keyword id="KW-1185">Reference proteome</keyword>
<dbReference type="EC" id="1.3.7.7" evidence="1"/>
<dbReference type="EMBL" id="AP005672">
    <property type="protein sequence ID" value="BAC85061.1"/>
    <property type="molecule type" value="Genomic_DNA"/>
</dbReference>
<dbReference type="RefSeq" id="NP_904211.1">
    <property type="nucleotide sequence ID" value="NC_005087.1"/>
</dbReference>
<dbReference type="SMR" id="Q6YXN5"/>
<dbReference type="STRING" id="3218.Q6YXN5"/>
<dbReference type="GeneID" id="2546744"/>
<dbReference type="KEGG" id="ppp:2546744"/>
<dbReference type="InParanoid" id="Q6YXN5"/>
<dbReference type="OrthoDB" id="645at2759"/>
<dbReference type="UniPathway" id="UPA00670"/>
<dbReference type="Proteomes" id="UP000006727">
    <property type="component" value="Chloroplast"/>
</dbReference>
<dbReference type="GO" id="GO:0009507">
    <property type="term" value="C:chloroplast"/>
    <property type="evidence" value="ECO:0007669"/>
    <property type="project" value="UniProtKB-SubCell"/>
</dbReference>
<dbReference type="GO" id="GO:0051539">
    <property type="term" value="F:4 iron, 4 sulfur cluster binding"/>
    <property type="evidence" value="ECO:0007669"/>
    <property type="project" value="UniProtKB-UniRule"/>
</dbReference>
<dbReference type="GO" id="GO:0005524">
    <property type="term" value="F:ATP binding"/>
    <property type="evidence" value="ECO:0007669"/>
    <property type="project" value="UniProtKB-UniRule"/>
</dbReference>
<dbReference type="GO" id="GO:0046872">
    <property type="term" value="F:metal ion binding"/>
    <property type="evidence" value="ECO:0007669"/>
    <property type="project" value="UniProtKB-KW"/>
</dbReference>
<dbReference type="GO" id="GO:0016730">
    <property type="term" value="F:oxidoreductase activity, acting on iron-sulfur proteins as donors"/>
    <property type="evidence" value="ECO:0007669"/>
    <property type="project" value="InterPro"/>
</dbReference>
<dbReference type="GO" id="GO:0016636">
    <property type="term" value="F:oxidoreductase activity, acting on the CH-CH group of donors, iron-sulfur protein as acceptor"/>
    <property type="evidence" value="ECO:0007669"/>
    <property type="project" value="UniProtKB-UniRule"/>
</dbReference>
<dbReference type="GO" id="GO:0036068">
    <property type="term" value="P:light-independent chlorophyll biosynthetic process"/>
    <property type="evidence" value="ECO:0007669"/>
    <property type="project" value="UniProtKB-UniRule"/>
</dbReference>
<dbReference type="GO" id="GO:0019685">
    <property type="term" value="P:photosynthesis, dark reaction"/>
    <property type="evidence" value="ECO:0007669"/>
    <property type="project" value="InterPro"/>
</dbReference>
<dbReference type="CDD" id="cd01981">
    <property type="entry name" value="Pchlide_reductase_B"/>
    <property type="match status" value="1"/>
</dbReference>
<dbReference type="Gene3D" id="1.20.89.20">
    <property type="match status" value="1"/>
</dbReference>
<dbReference type="Gene3D" id="3.40.50.1980">
    <property type="entry name" value="Nitrogenase molybdenum iron protein domain"/>
    <property type="match status" value="3"/>
</dbReference>
<dbReference type="Gene3D" id="1.10.8.550">
    <property type="entry name" value="Proto-chlorophyllide reductase 57 kD subunit B"/>
    <property type="match status" value="1"/>
</dbReference>
<dbReference type="HAMAP" id="MF_00353">
    <property type="entry name" value="ChlB_BchB"/>
    <property type="match status" value="1"/>
</dbReference>
<dbReference type="InterPro" id="IPR050152">
    <property type="entry name" value="ChlB/BchB/BchZ"/>
</dbReference>
<dbReference type="InterPro" id="IPR013580">
    <property type="entry name" value="LI-POR_suB-like_C"/>
</dbReference>
<dbReference type="InterPro" id="IPR000510">
    <property type="entry name" value="Nase/OxRdtase_comp1"/>
</dbReference>
<dbReference type="InterPro" id="IPR042298">
    <property type="entry name" value="P-CP_red_C"/>
</dbReference>
<dbReference type="InterPro" id="IPR005969">
    <property type="entry name" value="Protochl_reductB"/>
</dbReference>
<dbReference type="InterPro" id="IPR016209">
    <property type="entry name" value="Protochlorophyllide_Rdtase"/>
</dbReference>
<dbReference type="NCBIfam" id="TIGR01278">
    <property type="entry name" value="DPOR_BchB"/>
    <property type="match status" value="1"/>
</dbReference>
<dbReference type="PANTHER" id="PTHR33712">
    <property type="entry name" value="LIGHT-INDEPENDENT PROTOCHLOROPHYLLIDE REDUCTASE SUBUNIT B"/>
    <property type="match status" value="1"/>
</dbReference>
<dbReference type="PANTHER" id="PTHR33712:SF7">
    <property type="entry name" value="LIGHT-INDEPENDENT PROTOCHLOROPHYLLIDE REDUCTASE SUBUNIT B"/>
    <property type="match status" value="1"/>
</dbReference>
<dbReference type="Pfam" id="PF00148">
    <property type="entry name" value="Oxidored_nitro"/>
    <property type="match status" value="1"/>
</dbReference>
<dbReference type="Pfam" id="PF08369">
    <property type="entry name" value="PCP_red"/>
    <property type="match status" value="1"/>
</dbReference>
<dbReference type="PIRSF" id="PIRSF000163">
    <property type="entry name" value="PCP_ChlB"/>
    <property type="match status" value="1"/>
</dbReference>
<dbReference type="SUPFAM" id="SSF53807">
    <property type="entry name" value="Helical backbone' metal receptor"/>
    <property type="match status" value="1"/>
</dbReference>
<geneLocation type="chloroplast"/>
<comment type="function">
    <text evidence="1">Component of the dark-operative protochlorophyllide reductase (DPOR) that uses Mg-ATP and reduced ferredoxin to reduce ring D of protochlorophyllide (Pchlide) to form chlorophyllide a (Chlide). This reaction is light-independent. The NB-protein (ChlN-ChlB) is the catalytic component of the complex.</text>
</comment>
<comment type="catalytic activity">
    <reaction evidence="1">
        <text>chlorophyllide a + oxidized 2[4Fe-4S]-[ferredoxin] + 2 ADP + 2 phosphate = protochlorophyllide a + reduced 2[4Fe-4S]-[ferredoxin] + 2 ATP + 2 H2O</text>
        <dbReference type="Rhea" id="RHEA:28202"/>
        <dbReference type="Rhea" id="RHEA-COMP:10002"/>
        <dbReference type="Rhea" id="RHEA-COMP:10004"/>
        <dbReference type="ChEBI" id="CHEBI:15377"/>
        <dbReference type="ChEBI" id="CHEBI:30616"/>
        <dbReference type="ChEBI" id="CHEBI:33722"/>
        <dbReference type="ChEBI" id="CHEBI:33723"/>
        <dbReference type="ChEBI" id="CHEBI:43474"/>
        <dbReference type="ChEBI" id="CHEBI:83348"/>
        <dbReference type="ChEBI" id="CHEBI:83350"/>
        <dbReference type="ChEBI" id="CHEBI:456216"/>
        <dbReference type="EC" id="1.3.7.7"/>
    </reaction>
</comment>
<comment type="cofactor">
    <cofactor evidence="1">
        <name>[4Fe-4S] cluster</name>
        <dbReference type="ChEBI" id="CHEBI:49883"/>
    </cofactor>
    <text evidence="1">Binds 1 [4Fe-4S] cluster per heterodimer. The cluster is bound at the heterodimer interface by residues from both subunits.</text>
</comment>
<comment type="pathway">
    <text evidence="1">Porphyrin-containing compound metabolism; chlorophyll biosynthesis (light-independent).</text>
</comment>
<comment type="subunit">
    <text evidence="1">Protochlorophyllide reductase is composed of three subunits; ChlL, ChlN and ChlB. Forms a heterotetramer of two ChlB and two ChlN subunits.</text>
</comment>
<comment type="subcellular location">
    <subcellularLocation>
        <location>Plastid</location>
        <location>Chloroplast</location>
    </subcellularLocation>
</comment>
<comment type="similarity">
    <text evidence="1">Belongs to the ChlB/BchB/BchZ family.</text>
</comment>
<gene>
    <name evidence="1" type="primary">chlB</name>
</gene>